<protein>
    <recommendedName>
        <fullName evidence="14">Dyslexia-associated protein KIAA0319-like protein</fullName>
    </recommendedName>
    <alternativeName>
        <fullName evidence="12">Adeno-associated virus receptor</fullName>
        <shortName evidence="12">AAVR</shortName>
    </alternativeName>
</protein>
<organism>
    <name type="scientific">Homo sapiens</name>
    <name type="common">Human</name>
    <dbReference type="NCBI Taxonomy" id="9606"/>
    <lineage>
        <taxon>Eukaryota</taxon>
        <taxon>Metazoa</taxon>
        <taxon>Chordata</taxon>
        <taxon>Craniata</taxon>
        <taxon>Vertebrata</taxon>
        <taxon>Euteleostomi</taxon>
        <taxon>Mammalia</taxon>
        <taxon>Eutheria</taxon>
        <taxon>Euarchontoglires</taxon>
        <taxon>Primates</taxon>
        <taxon>Haplorrhini</taxon>
        <taxon>Catarrhini</taxon>
        <taxon>Hominidae</taxon>
        <taxon>Homo</taxon>
    </lineage>
</organism>
<evidence type="ECO:0000250" key="1">
    <source>
        <dbReference type="UniProtKB" id="Q8K135"/>
    </source>
</evidence>
<evidence type="ECO:0000255" key="2"/>
<evidence type="ECO:0000255" key="3">
    <source>
        <dbReference type="PROSITE-ProRule" id="PRU00151"/>
    </source>
</evidence>
<evidence type="ECO:0000255" key="4">
    <source>
        <dbReference type="PROSITE-ProRule" id="PRU00341"/>
    </source>
</evidence>
<evidence type="ECO:0000256" key="5">
    <source>
        <dbReference type="SAM" id="MobiDB-lite"/>
    </source>
</evidence>
<evidence type="ECO:0000269" key="6">
    <source>
    </source>
</evidence>
<evidence type="ECO:0000269" key="7">
    <source>
    </source>
</evidence>
<evidence type="ECO:0000269" key="8">
    <source>
    </source>
</evidence>
<evidence type="ECO:0000303" key="9">
    <source>
    </source>
</evidence>
<evidence type="ECO:0000303" key="10">
    <source>
    </source>
</evidence>
<evidence type="ECO:0000303" key="11">
    <source>
    </source>
</evidence>
<evidence type="ECO:0000303" key="12">
    <source>
    </source>
</evidence>
<evidence type="ECO:0000305" key="13"/>
<evidence type="ECO:0000305" key="14">
    <source>
    </source>
</evidence>
<evidence type="ECO:0000312" key="15">
    <source>
        <dbReference type="HGNC" id="HGNC:30071"/>
    </source>
</evidence>
<evidence type="ECO:0007744" key="16">
    <source>
    </source>
</evidence>
<evidence type="ECO:0007744" key="17">
    <source>
    </source>
</evidence>
<evidence type="ECO:0007829" key="18">
    <source>
        <dbReference type="PDB" id="2YRL"/>
    </source>
</evidence>
<evidence type="ECO:0007829" key="19">
    <source>
        <dbReference type="PDB" id="6JCS"/>
    </source>
</evidence>
<evidence type="ECO:0007829" key="20">
    <source>
        <dbReference type="PDB" id="6NZ0"/>
    </source>
</evidence>
<evidence type="ECO:0007829" key="21">
    <source>
        <dbReference type="PDB" id="7KPN"/>
    </source>
</evidence>
<comment type="function">
    <text evidence="7">Possible role in axon guidance through interaction with RTN4R.</text>
</comment>
<comment type="function">
    <text evidence="8">(Microbial infection) Acts as a receptor for adeno-associated virus and is involved in adeno-associated virus infection through endocytosis system.</text>
</comment>
<comment type="subunit">
    <text evidence="7">Interacts with RTN4R.</text>
</comment>
<comment type="subunit">
    <text evidence="8">(Microbial infection) Interacts with AAV-2 VP1.</text>
</comment>
<comment type="interaction">
    <interactant intactId="EBI-5240269">
        <id>Q8IZA0</id>
    </interactant>
    <interactant intactId="EBI-5240240">
        <id>Q9BZR6</id>
        <label>RTN4R</label>
    </interactant>
    <organismsDiffer>false</organismsDiffer>
    <experiments>4</experiments>
</comment>
<comment type="interaction">
    <interactant intactId="EBI-5240269">
        <id>Q8IZA0</id>
    </interactant>
    <interactant intactId="EBI-747107">
        <id>Q8IUQ4</id>
        <label>SIAH1</label>
    </interactant>
    <organismsDiffer>false</organismsDiffer>
    <experiments>3</experiments>
</comment>
<comment type="subcellular location">
    <subcellularLocation>
        <location evidence="13">Cytoplasmic granule membrane</location>
        <topology evidence="13">Multi-pass membrane protein</topology>
    </subcellularLocation>
    <subcellularLocation>
        <location evidence="8">Golgi apparatus membrane</location>
        <topology evidence="13">Multi-pass membrane protein</topology>
    </subcellularLocation>
    <subcellularLocation>
        <location evidence="8">Golgi apparatus</location>
        <location evidence="8">trans-Golgi network membrane</location>
        <topology evidence="13">Multi-pass membrane protein</topology>
    </subcellularLocation>
    <subcellularLocation>
        <location evidence="8">Cell membrane</location>
        <topology evidence="13">Multi-pass membrane protein</topology>
    </subcellularLocation>
    <text evidence="8">Traffics from the plasma membrane to the trans-Golgi network.</text>
</comment>
<comment type="alternative products">
    <event type="alternative splicing"/>
    <isoform>
        <id>Q8IZA0-1</id>
        <name>1</name>
        <sequence type="displayed"/>
    </isoform>
    <isoform>
        <id>Q8IZA0-2</id>
        <name>2</name>
        <sequence type="described" ref="VSP_032955"/>
    </isoform>
    <isoform>
        <id>Q8IZA0-3</id>
        <name>3</name>
        <sequence type="described" ref="VSP_032953 VSP_032954"/>
    </isoform>
</comment>
<comment type="tissue specificity">
    <text evidence="7">Expressed in cortical neurons in the brain cortex (at protein level).</text>
</comment>
<comment type="PTM">
    <text evidence="6 7">N-glycosylated.</text>
</comment>
<comment type="sequence caution" evidence="13">
    <conflict type="erroneous gene model prediction">
        <sequence resource="EMBL-CDS" id="AAD05028"/>
    </conflict>
</comment>
<comment type="sequence caution" evidence="13">
    <conflict type="erroneous initiation">
        <sequence resource="EMBL-CDS" id="AAL55781"/>
    </conflict>
    <text>Truncated N-terminus.</text>
</comment>
<comment type="sequence caution" evidence="13">
    <conflict type="erroneous initiation">
        <sequence resource="EMBL-CDS" id="BAB14874"/>
    </conflict>
    <text>Truncated N-terminus.</text>
</comment>
<comment type="sequence caution" evidence="13">
    <conflict type="miscellaneous discrepancy">
        <sequence resource="EMBL-CDS" id="BAB47466"/>
    </conflict>
    <text>Contaminating sequence. Sequence of unknown origin in the N-terminal part.</text>
</comment>
<proteinExistence type="evidence at protein level"/>
<keyword id="KW-0002">3D-structure</keyword>
<keyword id="KW-0025">Alternative splicing</keyword>
<keyword id="KW-1003">Cell membrane</keyword>
<keyword id="KW-0325">Glycoprotein</keyword>
<keyword id="KW-0333">Golgi apparatus</keyword>
<keyword id="KW-0945">Host-virus interaction</keyword>
<keyword id="KW-0472">Membrane</keyword>
<keyword id="KW-0597">Phosphoprotein</keyword>
<keyword id="KW-1267">Proteomics identification</keyword>
<keyword id="KW-1185">Reference proteome</keyword>
<keyword id="KW-0677">Repeat</keyword>
<keyword id="KW-0812">Transmembrane</keyword>
<keyword id="KW-1133">Transmembrane helix</keyword>
<feature type="chain" id="PRO_0000329064" description="Dyslexia-associated protein KIAA0319-like protein">
    <location>
        <begin position="1"/>
        <end position="1049"/>
    </location>
</feature>
<feature type="topological domain" description="Cytoplasmic" evidence="2">
    <location>
        <begin position="1"/>
        <end position="29"/>
    </location>
</feature>
<feature type="transmembrane region" description="Helical" evidence="2">
    <location>
        <begin position="30"/>
        <end position="50"/>
    </location>
</feature>
<feature type="topological domain" description="Extracellular" evidence="2">
    <location>
        <begin position="51"/>
        <end position="932"/>
    </location>
</feature>
<feature type="transmembrane region" description="Helical" evidence="2">
    <location>
        <begin position="933"/>
        <end position="953"/>
    </location>
</feature>
<feature type="topological domain" description="Cytoplasmic" evidence="2">
    <location>
        <begin position="954"/>
        <end position="1049"/>
    </location>
</feature>
<feature type="domain" description="MANSC" evidence="4">
    <location>
        <begin position="49"/>
        <end position="127"/>
    </location>
</feature>
<feature type="domain" description="PKD 1" evidence="3">
    <location>
        <begin position="312"/>
        <end position="401"/>
    </location>
</feature>
<feature type="domain" description="PKD 2" evidence="3">
    <location>
        <begin position="409"/>
        <end position="498"/>
    </location>
</feature>
<feature type="domain" description="PKD 3" evidence="3">
    <location>
        <begin position="504"/>
        <end position="594"/>
    </location>
</feature>
<feature type="domain" description="PKD 4" evidence="3">
    <location>
        <begin position="600"/>
        <end position="688"/>
    </location>
</feature>
<feature type="domain" description="PKD 5" evidence="3">
    <location>
        <begin position="694"/>
        <end position="785"/>
    </location>
</feature>
<feature type="region of interest" description="Disordered" evidence="5">
    <location>
        <begin position="1022"/>
        <end position="1049"/>
    </location>
</feature>
<feature type="compositionally biased region" description="Polar residues" evidence="5">
    <location>
        <begin position="1028"/>
        <end position="1037"/>
    </location>
</feature>
<feature type="modified residue" description="Phosphothreonine" evidence="17">
    <location>
        <position position="974"/>
    </location>
</feature>
<feature type="modified residue" description="Phosphoserine" evidence="17">
    <location>
        <position position="978"/>
    </location>
</feature>
<feature type="modified residue" description="Phosphoserine" evidence="1">
    <location>
        <position position="1009"/>
    </location>
</feature>
<feature type="modified residue" description="Phosphoserine" evidence="17">
    <location>
        <position position="1031"/>
    </location>
</feature>
<feature type="modified residue" description="Phosphothreonine" evidence="16">
    <location>
        <position position="1037"/>
    </location>
</feature>
<feature type="glycosylation site" description="N-linked (GlcNAc...) asparagine" evidence="2">
    <location>
        <position position="247"/>
    </location>
</feature>
<feature type="glycosylation site" description="N-linked (GlcNAc...) asparagine" evidence="2">
    <location>
        <position position="395"/>
    </location>
</feature>
<feature type="glycosylation site" description="N-linked (GlcNAc...) asparagine" evidence="6">
    <location>
        <position position="472"/>
    </location>
</feature>
<feature type="glycosylation site" description="N-linked (GlcNAc...) asparagine" evidence="2">
    <location>
        <position position="487"/>
    </location>
</feature>
<feature type="glycosylation site" description="N-linked (GlcNAc...) asparagine" evidence="6">
    <location>
        <position position="525"/>
    </location>
</feature>
<feature type="splice variant" id="VSP_032953" description="In isoform 3." evidence="10">
    <location>
        <begin position="1"/>
        <end position="563"/>
    </location>
</feature>
<feature type="splice variant" id="VSP_032954" description="In isoform 3." evidence="10">
    <original>Q</original>
    <variation>HFFFCR</variation>
    <location>
        <position position="638"/>
    </location>
</feature>
<feature type="splice variant" id="VSP_032955" description="In isoform 2." evidence="9">
    <original>IKQKGLLLSSSLMHSESELDSDDAIFTWPDREKGKLLHGQNGSVPNGQTPLKARSPREEIL</original>
    <variation>RGPGCQSF</variation>
    <location>
        <begin position="989"/>
        <end position="1049"/>
    </location>
</feature>
<feature type="sequence variant" id="VAR_042644" description="In dbSNP:rs1635712.">
    <original>G</original>
    <variation>D</variation>
    <location>
        <position position="243"/>
    </location>
</feature>
<feature type="sequence variant" id="VAR_042645" description="In dbSNP:rs1361040.">
    <original>Q</original>
    <variation>H</variation>
    <location>
        <position position="837"/>
    </location>
</feature>
<feature type="sequence conflict" description="In Ref. 1; AAN61054 and 2; AAG24389." evidence="13" ref="1 2">
    <original>C</original>
    <variation>Y</variation>
    <location>
        <position position="37"/>
    </location>
</feature>
<feature type="sequence conflict" description="In Ref. 5; AAH14530." evidence="13" ref="5">
    <original>W</original>
    <variation>L</variation>
    <location>
        <position position="86"/>
    </location>
</feature>
<feature type="sequence conflict" description="In Ref. 2; AAG24389." evidence="13" ref="2">
    <original>H</original>
    <variation>Y</variation>
    <location>
        <position position="203"/>
    </location>
</feature>
<feature type="sequence conflict" description="In Ref. 2; AAG24389." evidence="13" ref="2">
    <original>I</original>
    <variation>T</variation>
    <location>
        <position position="520"/>
    </location>
</feature>
<feature type="strand" evidence="21">
    <location>
        <begin position="315"/>
        <end position="319"/>
    </location>
</feature>
<feature type="strand" evidence="21">
    <location>
        <begin position="326"/>
        <end position="328"/>
    </location>
</feature>
<feature type="strand" evidence="19">
    <location>
        <begin position="332"/>
        <end position="334"/>
    </location>
</feature>
<feature type="strand" evidence="21">
    <location>
        <begin position="348"/>
        <end position="350"/>
    </location>
</feature>
<feature type="strand" evidence="21">
    <location>
        <begin position="358"/>
        <end position="360"/>
    </location>
</feature>
<feature type="strand" evidence="21">
    <location>
        <begin position="362"/>
        <end position="365"/>
    </location>
</feature>
<feature type="strand" evidence="21">
    <location>
        <begin position="367"/>
        <end position="371"/>
    </location>
</feature>
<feature type="strand" evidence="21">
    <location>
        <begin position="374"/>
        <end position="382"/>
    </location>
</feature>
<feature type="strand" evidence="21">
    <location>
        <begin position="391"/>
        <end position="398"/>
    </location>
</feature>
<feature type="strand" evidence="20">
    <location>
        <begin position="415"/>
        <end position="420"/>
    </location>
</feature>
<feature type="strand" evidence="20">
    <location>
        <begin position="426"/>
        <end position="429"/>
    </location>
</feature>
<feature type="strand" evidence="20">
    <location>
        <begin position="434"/>
        <end position="437"/>
    </location>
</feature>
<feature type="strand" evidence="20">
    <location>
        <begin position="441"/>
        <end position="448"/>
    </location>
</feature>
<feature type="strand" evidence="20">
    <location>
        <begin position="461"/>
        <end position="465"/>
    </location>
</feature>
<feature type="strand" evidence="20">
    <location>
        <begin position="470"/>
        <end position="480"/>
    </location>
</feature>
<feature type="strand" evidence="20">
    <location>
        <begin position="482"/>
        <end position="484"/>
    </location>
</feature>
<feature type="strand" evidence="20">
    <location>
        <begin position="486"/>
        <end position="496"/>
    </location>
</feature>
<feature type="strand" evidence="18">
    <location>
        <begin position="607"/>
        <end position="610"/>
    </location>
</feature>
<feature type="strand" evidence="18">
    <location>
        <begin position="615"/>
        <end position="619"/>
    </location>
</feature>
<feature type="strand" evidence="18">
    <location>
        <begin position="625"/>
        <end position="627"/>
    </location>
</feature>
<feature type="strand" evidence="18">
    <location>
        <begin position="634"/>
        <end position="639"/>
    </location>
</feature>
<feature type="strand" evidence="18">
    <location>
        <begin position="644"/>
        <end position="647"/>
    </location>
</feature>
<feature type="strand" evidence="18">
    <location>
        <begin position="650"/>
        <end position="657"/>
    </location>
</feature>
<feature type="strand" evidence="18">
    <location>
        <begin position="660"/>
        <end position="671"/>
    </location>
</feature>
<feature type="strand" evidence="18">
    <location>
        <begin position="676"/>
        <end position="686"/>
    </location>
</feature>
<name>K319L_HUMAN</name>
<dbReference type="EMBL" id="AY163234">
    <property type="protein sequence ID" value="AAN61054.1"/>
    <property type="molecule type" value="mRNA"/>
</dbReference>
<dbReference type="EMBL" id="AF275679">
    <property type="protein sequence ID" value="AAG24389.2"/>
    <property type="molecule type" value="mRNA"/>
</dbReference>
<dbReference type="EMBL" id="AF289597">
    <property type="protein sequence ID" value="AAL55781.1"/>
    <property type="status" value="ALT_INIT"/>
    <property type="molecule type" value="mRNA"/>
</dbReference>
<dbReference type="EMBL" id="AC004865">
    <property type="protein sequence ID" value="AAD05028.1"/>
    <property type="status" value="ALT_SEQ"/>
    <property type="molecule type" value="Genomic_DNA"/>
</dbReference>
<dbReference type="EMBL" id="AL356362">
    <property type="status" value="NOT_ANNOTATED_CDS"/>
    <property type="molecule type" value="Genomic_DNA"/>
</dbReference>
<dbReference type="EMBL" id="AL445211">
    <property type="status" value="NOT_ANNOTATED_CDS"/>
    <property type="molecule type" value="Genomic_DNA"/>
</dbReference>
<dbReference type="EMBL" id="CH471059">
    <property type="protein sequence ID" value="EAX07415.1"/>
    <property type="molecule type" value="Genomic_DNA"/>
</dbReference>
<dbReference type="EMBL" id="CH471059">
    <property type="protein sequence ID" value="EAX07416.1"/>
    <property type="molecule type" value="Genomic_DNA"/>
</dbReference>
<dbReference type="EMBL" id="BC001858">
    <property type="protein sequence ID" value="AAH01858.2"/>
    <property type="molecule type" value="mRNA"/>
</dbReference>
<dbReference type="EMBL" id="BC007645">
    <property type="protein sequence ID" value="AAH07645.1"/>
    <property type="molecule type" value="mRNA"/>
</dbReference>
<dbReference type="EMBL" id="BC014530">
    <property type="protein sequence ID" value="AAH14530.1"/>
    <property type="molecule type" value="mRNA"/>
</dbReference>
<dbReference type="EMBL" id="BC031672">
    <property type="protein sequence ID" value="AAH31672.2"/>
    <property type="molecule type" value="mRNA"/>
</dbReference>
<dbReference type="EMBL" id="AL834315">
    <property type="protein sequence ID" value="CAD38985.1"/>
    <property type="molecule type" value="mRNA"/>
</dbReference>
<dbReference type="EMBL" id="AK024287">
    <property type="protein sequence ID" value="BAB14874.1"/>
    <property type="status" value="ALT_INIT"/>
    <property type="molecule type" value="mRNA"/>
</dbReference>
<dbReference type="EMBL" id="AK090878">
    <property type="protein sequence ID" value="BAC03536.1"/>
    <property type="molecule type" value="mRNA"/>
</dbReference>
<dbReference type="EMBL" id="AB058740">
    <property type="protein sequence ID" value="BAB47466.1"/>
    <property type="status" value="ALT_SEQ"/>
    <property type="molecule type" value="mRNA"/>
</dbReference>
<dbReference type="CCDS" id="CCDS390.1">
    <molecule id="Q8IZA0-1"/>
</dbReference>
<dbReference type="RefSeq" id="NP_079150.3">
    <molecule id="Q8IZA0-1"/>
    <property type="nucleotide sequence ID" value="NM_024874.4"/>
</dbReference>
<dbReference type="RefSeq" id="XP_006710970.1">
    <property type="nucleotide sequence ID" value="XM_006710907.1"/>
</dbReference>
<dbReference type="RefSeq" id="XP_006710972.1">
    <molecule id="Q8IZA0-1"/>
    <property type="nucleotide sequence ID" value="XM_006710909.3"/>
</dbReference>
<dbReference type="RefSeq" id="XP_006710973.1">
    <property type="nucleotide sequence ID" value="XM_006710910.1"/>
</dbReference>
<dbReference type="RefSeq" id="XP_011540481.1">
    <property type="nucleotide sequence ID" value="XM_011542179.2"/>
</dbReference>
<dbReference type="RefSeq" id="XP_016857865.1">
    <property type="nucleotide sequence ID" value="XM_017002376.1"/>
</dbReference>
<dbReference type="RefSeq" id="XP_016857867.1">
    <property type="nucleotide sequence ID" value="XM_017002378.1"/>
</dbReference>
<dbReference type="RefSeq" id="XP_047286782.1">
    <molecule id="Q8IZA0-1"/>
    <property type="nucleotide sequence ID" value="XM_047430826.1"/>
</dbReference>
<dbReference type="RefSeq" id="XP_054194780.1">
    <molecule id="Q8IZA0-1"/>
    <property type="nucleotide sequence ID" value="XM_054338805.1"/>
</dbReference>
<dbReference type="RefSeq" id="XP_054194785.1">
    <molecule id="Q8IZA0-1"/>
    <property type="nucleotide sequence ID" value="XM_054338810.1"/>
</dbReference>
<dbReference type="PDB" id="2YRL">
    <property type="method" value="NMR"/>
    <property type="chains" value="A=600-688"/>
</dbReference>
<dbReference type="PDB" id="6IHB">
    <property type="method" value="EM"/>
    <property type="resolution" value="2.84 A"/>
    <property type="chains" value="R=404-497"/>
</dbReference>
<dbReference type="PDB" id="6JCQ">
    <property type="method" value="EM"/>
    <property type="resolution" value="3.30 A"/>
    <property type="chains" value="R=407-497"/>
</dbReference>
<dbReference type="PDB" id="6JCS">
    <property type="method" value="EM"/>
    <property type="resolution" value="3.18 A"/>
    <property type="chains" value="R=305-401"/>
</dbReference>
<dbReference type="PDB" id="6NZ0">
    <property type="method" value="EM"/>
    <property type="resolution" value="2.40 A"/>
    <property type="chains" value="Z=311-597"/>
</dbReference>
<dbReference type="PDB" id="7KPN">
    <property type="method" value="EM"/>
    <property type="resolution" value="1.90 A"/>
    <property type="chains" value="Z=311-500"/>
</dbReference>
<dbReference type="PDB" id="7TI5">
    <property type="method" value="EM"/>
    <property type="resolution" value="2.40 A"/>
    <property type="chains" value="Z=311-597"/>
</dbReference>
<dbReference type="PDB" id="7WJX">
    <property type="method" value="EM"/>
    <property type="resolution" value="3.23 A"/>
    <property type="chains" value="R=403-497"/>
</dbReference>
<dbReference type="PDB" id="7WQP">
    <property type="method" value="EM"/>
    <property type="resolution" value="3.76 A"/>
    <property type="chains" value="R=405-496"/>
</dbReference>
<dbReference type="PDBsum" id="2YRL"/>
<dbReference type="PDBsum" id="6IHB"/>
<dbReference type="PDBsum" id="6JCQ"/>
<dbReference type="PDBsum" id="6JCS"/>
<dbReference type="PDBsum" id="6NZ0"/>
<dbReference type="PDBsum" id="7KPN"/>
<dbReference type="PDBsum" id="7TI5"/>
<dbReference type="PDBsum" id="7WJX"/>
<dbReference type="PDBsum" id="7WQP"/>
<dbReference type="EMDB" id="EMD-0553"/>
<dbReference type="EMDB" id="EMD-22988"/>
<dbReference type="EMDB" id="EMD-25910"/>
<dbReference type="EMDB" id="EMD-32551"/>
<dbReference type="EMDB" id="EMD-32712"/>
<dbReference type="EMDB" id="EMD-9672"/>
<dbReference type="EMDB" id="EMD-9794"/>
<dbReference type="EMDB" id="EMD-9796"/>
<dbReference type="SMR" id="Q8IZA0"/>
<dbReference type="BioGRID" id="123007">
    <property type="interactions" value="96"/>
</dbReference>
<dbReference type="FunCoup" id="Q8IZA0">
    <property type="interactions" value="1896"/>
</dbReference>
<dbReference type="IntAct" id="Q8IZA0">
    <property type="interactions" value="58"/>
</dbReference>
<dbReference type="MINT" id="Q8IZA0"/>
<dbReference type="STRING" id="9606.ENSP00000318406"/>
<dbReference type="GlyCosmos" id="Q8IZA0">
    <property type="glycosylation" value="10 sites, 4 glycans"/>
</dbReference>
<dbReference type="GlyGen" id="Q8IZA0">
    <property type="glycosylation" value="27 sites, 26 N-linked glycans (5 sites), 6 O-linked glycans (16 sites)"/>
</dbReference>
<dbReference type="iPTMnet" id="Q8IZA0"/>
<dbReference type="PhosphoSitePlus" id="Q8IZA0"/>
<dbReference type="SwissPalm" id="Q8IZA0"/>
<dbReference type="BioMuta" id="KIAA0319L"/>
<dbReference type="DMDM" id="187609609"/>
<dbReference type="jPOST" id="Q8IZA0"/>
<dbReference type="MassIVE" id="Q8IZA0"/>
<dbReference type="PaxDb" id="9606-ENSP00000318406"/>
<dbReference type="PeptideAtlas" id="Q8IZA0"/>
<dbReference type="ProteomicsDB" id="71307">
    <molecule id="Q8IZA0-1"/>
</dbReference>
<dbReference type="ProteomicsDB" id="71308">
    <molecule id="Q8IZA0-2"/>
</dbReference>
<dbReference type="ProteomicsDB" id="71309">
    <molecule id="Q8IZA0-3"/>
</dbReference>
<dbReference type="Pumba" id="Q8IZA0"/>
<dbReference type="Antibodypedia" id="2498">
    <property type="antibodies" value="86 antibodies from 18 providers"/>
</dbReference>
<dbReference type="DNASU" id="79932"/>
<dbReference type="Ensembl" id="ENST00000325722.8">
    <molecule id="Q8IZA0-1"/>
    <property type="protein sequence ID" value="ENSP00000318406.3"/>
    <property type="gene ID" value="ENSG00000142687.19"/>
</dbReference>
<dbReference type="Ensembl" id="ENST00000426982.7">
    <molecule id="Q8IZA0-1"/>
    <property type="protein sequence ID" value="ENSP00000395883.3"/>
    <property type="gene ID" value="ENSG00000142687.19"/>
</dbReference>
<dbReference type="Ensembl" id="ENST00000469892.7">
    <molecule id="Q8IZA0-1"/>
    <property type="protein sequence ID" value="ENSP00000419396.2"/>
    <property type="gene ID" value="ENSG00000142687.19"/>
</dbReference>
<dbReference type="GeneID" id="79932"/>
<dbReference type="KEGG" id="hsa:79932"/>
<dbReference type="MANE-Select" id="ENST00000325722.8">
    <property type="protein sequence ID" value="ENSP00000318406.3"/>
    <property type="RefSeq nucleotide sequence ID" value="NM_024874.5"/>
    <property type="RefSeq protein sequence ID" value="NP_079150.3"/>
</dbReference>
<dbReference type="UCSC" id="uc001byx.4">
    <molecule id="Q8IZA0-1"/>
    <property type="organism name" value="human"/>
</dbReference>
<dbReference type="AGR" id="HGNC:30071"/>
<dbReference type="CTD" id="79932"/>
<dbReference type="DisGeNET" id="79932"/>
<dbReference type="GeneCards" id="KIAA0319L"/>
<dbReference type="HGNC" id="HGNC:30071">
    <property type="gene designation" value="KIAA0319L"/>
</dbReference>
<dbReference type="HPA" id="ENSG00000142687">
    <property type="expression patterns" value="Low tissue specificity"/>
</dbReference>
<dbReference type="MalaCards" id="KIAA0319L"/>
<dbReference type="MIM" id="613535">
    <property type="type" value="gene"/>
</dbReference>
<dbReference type="neXtProt" id="NX_Q8IZA0"/>
<dbReference type="OpenTargets" id="ENSG00000142687"/>
<dbReference type="Orphanet" id="220402">
    <property type="disease" value="Limited cutaneous systemic sclerosis"/>
</dbReference>
<dbReference type="Orphanet" id="536">
    <property type="disease" value="Systemic lupus erythematosus"/>
</dbReference>
<dbReference type="PharmGKB" id="PA142671625"/>
<dbReference type="VEuPathDB" id="HostDB:ENSG00000142687"/>
<dbReference type="eggNOG" id="ENOG502QR8M">
    <property type="taxonomic scope" value="Eukaryota"/>
</dbReference>
<dbReference type="GeneTree" id="ENSGT00940000157613"/>
<dbReference type="InParanoid" id="Q8IZA0"/>
<dbReference type="OMA" id="AYVIPDE"/>
<dbReference type="OrthoDB" id="536372at2759"/>
<dbReference type="PAN-GO" id="Q8IZA0">
    <property type="GO annotations" value="4 GO annotations based on evolutionary models"/>
</dbReference>
<dbReference type="PhylomeDB" id="Q8IZA0"/>
<dbReference type="TreeFam" id="TF323356"/>
<dbReference type="PathwayCommons" id="Q8IZA0"/>
<dbReference type="SignaLink" id="Q8IZA0"/>
<dbReference type="BioGRID-ORCS" id="79932">
    <property type="hits" value="14 hits in 1165 CRISPR screens"/>
</dbReference>
<dbReference type="ChiTaRS" id="KIAA0319L">
    <property type="organism name" value="human"/>
</dbReference>
<dbReference type="EvolutionaryTrace" id="Q8IZA0"/>
<dbReference type="GenomeRNAi" id="79932"/>
<dbReference type="Pharos" id="Q8IZA0">
    <property type="development level" value="Tbio"/>
</dbReference>
<dbReference type="PRO" id="PR:Q8IZA0"/>
<dbReference type="Proteomes" id="UP000005640">
    <property type="component" value="Chromosome 1"/>
</dbReference>
<dbReference type="RNAct" id="Q8IZA0">
    <property type="molecule type" value="protein"/>
</dbReference>
<dbReference type="Bgee" id="ENSG00000142687">
    <property type="expression patterns" value="Expressed in right uterine tube and 190 other cell types or tissues"/>
</dbReference>
<dbReference type="ExpressionAtlas" id="Q8IZA0">
    <property type="expression patterns" value="baseline and differential"/>
</dbReference>
<dbReference type="GO" id="GO:0031410">
    <property type="term" value="C:cytoplasmic vesicle"/>
    <property type="evidence" value="ECO:0000314"/>
    <property type="project" value="UniProtKB"/>
</dbReference>
<dbReference type="GO" id="GO:0005794">
    <property type="term" value="C:Golgi apparatus"/>
    <property type="evidence" value="ECO:0000314"/>
    <property type="project" value="HPA"/>
</dbReference>
<dbReference type="GO" id="GO:0000139">
    <property type="term" value="C:Golgi membrane"/>
    <property type="evidence" value="ECO:0007669"/>
    <property type="project" value="UniProtKB-SubCell"/>
</dbReference>
<dbReference type="GO" id="GO:0016020">
    <property type="term" value="C:membrane"/>
    <property type="evidence" value="ECO:0000318"/>
    <property type="project" value="GO_Central"/>
</dbReference>
<dbReference type="GO" id="GO:0005730">
    <property type="term" value="C:nucleolus"/>
    <property type="evidence" value="ECO:0000314"/>
    <property type="project" value="HPA"/>
</dbReference>
<dbReference type="GO" id="GO:0005886">
    <property type="term" value="C:plasma membrane"/>
    <property type="evidence" value="ECO:0007669"/>
    <property type="project" value="UniProtKB-SubCell"/>
</dbReference>
<dbReference type="GO" id="GO:0005802">
    <property type="term" value="C:trans-Golgi network"/>
    <property type="evidence" value="ECO:0007669"/>
    <property type="project" value="Ensembl"/>
</dbReference>
<dbReference type="GO" id="GO:0030317">
    <property type="term" value="P:flagellated sperm motility"/>
    <property type="evidence" value="ECO:0007669"/>
    <property type="project" value="Ensembl"/>
</dbReference>
<dbReference type="GO" id="GO:0001764">
    <property type="term" value="P:neuron migration"/>
    <property type="evidence" value="ECO:0000318"/>
    <property type="project" value="GO_Central"/>
</dbReference>
<dbReference type="GO" id="GO:0120211">
    <property type="term" value="P:proacrosomal vesicle fusion"/>
    <property type="evidence" value="ECO:0007669"/>
    <property type="project" value="Ensembl"/>
</dbReference>
<dbReference type="GO" id="GO:0019065">
    <property type="term" value="P:receptor-mediated endocytosis of virus by host cell"/>
    <property type="evidence" value="ECO:0007669"/>
    <property type="project" value="Ensembl"/>
</dbReference>
<dbReference type="GO" id="GO:0010996">
    <property type="term" value="P:response to auditory stimulus"/>
    <property type="evidence" value="ECO:0007669"/>
    <property type="project" value="Ensembl"/>
</dbReference>
<dbReference type="CDD" id="cd00146">
    <property type="entry name" value="PKD"/>
    <property type="match status" value="4"/>
</dbReference>
<dbReference type="FunFam" id="2.60.40.10:FF:000061">
    <property type="entry name" value="Dyslexia-associated protein KIAA0319 homolog"/>
    <property type="match status" value="2"/>
</dbReference>
<dbReference type="FunFam" id="2.60.40.10:FF:000258">
    <property type="entry name" value="Dyslexia-associated protein KIAA0319 homolog"/>
    <property type="match status" value="1"/>
</dbReference>
<dbReference type="FunFam" id="2.60.40.10:FF:000319">
    <property type="entry name" value="Dyslexia-associated protein KIAA0319 homolog"/>
    <property type="match status" value="1"/>
</dbReference>
<dbReference type="FunFam" id="2.60.40.10:FF:000257">
    <property type="entry name" value="Dyslexia-associated protein KIAA0319-like"/>
    <property type="match status" value="1"/>
</dbReference>
<dbReference type="Gene3D" id="2.60.40.10">
    <property type="entry name" value="Immunoglobulins"/>
    <property type="match status" value="5"/>
</dbReference>
<dbReference type="InterPro" id="IPR013783">
    <property type="entry name" value="Ig-like_fold"/>
</dbReference>
<dbReference type="InterPro" id="IPR029865">
    <property type="entry name" value="KIAA0319-like"/>
</dbReference>
<dbReference type="InterPro" id="IPR056502">
    <property type="entry name" value="KIAA0319-like_C"/>
</dbReference>
<dbReference type="InterPro" id="IPR013980">
    <property type="entry name" value="MANSC_dom"/>
</dbReference>
<dbReference type="InterPro" id="IPR022409">
    <property type="entry name" value="PKD/Chitinase_dom"/>
</dbReference>
<dbReference type="InterPro" id="IPR000601">
    <property type="entry name" value="PKD_dom"/>
</dbReference>
<dbReference type="InterPro" id="IPR035986">
    <property type="entry name" value="PKD_dom_sf"/>
</dbReference>
<dbReference type="PANTHER" id="PTHR46182:SF3">
    <property type="entry name" value="DYSLEXIA-ASSOCIATED PROTEIN KIAA0319-LIKE PROTEIN"/>
    <property type="match status" value="1"/>
</dbReference>
<dbReference type="PANTHER" id="PTHR46182">
    <property type="entry name" value="FI19480P1"/>
    <property type="match status" value="1"/>
</dbReference>
<dbReference type="Pfam" id="PF22352">
    <property type="entry name" value="K319L-like_PKD"/>
    <property type="match status" value="5"/>
</dbReference>
<dbReference type="Pfam" id="PF23620">
    <property type="entry name" value="KIAA0319"/>
    <property type="match status" value="1"/>
</dbReference>
<dbReference type="Pfam" id="PF23597">
    <property type="entry name" value="KIAA0319_N"/>
    <property type="match status" value="1"/>
</dbReference>
<dbReference type="SMART" id="SM00089">
    <property type="entry name" value="PKD"/>
    <property type="match status" value="5"/>
</dbReference>
<dbReference type="SUPFAM" id="SSF49299">
    <property type="entry name" value="PKD domain"/>
    <property type="match status" value="4"/>
</dbReference>
<dbReference type="PROSITE" id="PS50986">
    <property type="entry name" value="MANSC"/>
    <property type="match status" value="1"/>
</dbReference>
<dbReference type="PROSITE" id="PS50093">
    <property type="entry name" value="PKD"/>
    <property type="match status" value="1"/>
</dbReference>
<accession>Q8IZA0</accession>
<accession>B1AN13</accession>
<accession>D3DPR8</accession>
<accession>O95010</accession>
<accession>Q6PJJ7</accession>
<accession>Q7L1C9</accession>
<accession>Q8N2B3</accession>
<accession>Q8NDA0</accession>
<accession>Q8WY39</accession>
<accession>Q8WYZ5</accession>
<accession>Q96IC3</accession>
<accession>Q96JJ0</accession>
<accession>Q9BUW6</accession>
<accession>Q9H7V0</accession>
<sequence>MEKRLGVKPNPASWILSGYYWQTSAKWLRSLYLFYTCFCFSVLWLSTDASESRCQQGKTQFGVGLRSGGENHLWLLEGTPSLQSCWAACCQDSACHVFWWLEGMCIQADCSRPQSCRAFRTHSSNSMLVFLKKFQTADDLGFLPEDDVPHLLGLGWNWASWRQSPPRAALRPAVSSSDQQSLIRKLQKRGSPSDVVTPIVTQHSKVNDSNELGGLTTSGSAEVHKAITISSPLTTDLTAELSGGPKNVSVQPEISEGLATTPSTQQVKSSEKTQIAVPQPVAPSYSYATPTPQASFQSTSAPYPVIKELVVSAGESVQITLPKNEVQLNAYVLQEPPKGETYTYDWQLITHPRDYSGEMEGKHSQILKLSKLTPGLYEFKVIVEGQNAHGEGYVNVTVKPEPRKNRPPIAIVSPQFQEISLPTTSTVIDGSQSTDDDKIVQYHWEELKGPLREEKISEDTAILKLSKLVPGNYTFSLTVVDSDGATNSTTANLTVNKAVDYPPVANAGPNQVITLPQNSITLFGNQSTDDHGITSYEWSLSPSSKGKVVEMQGVRTPTLQLSAMQEGDYTYQLTVTDTIGQQATAQVTVIVQPENNKPPQADAGPDKELTLPVDSTTLDGSKSSDDQKIISYLWEKTQGPDGVQLENANSSVATVTGLQVGTYVFTLTVKDERNLQSQSSVNVIVKEEINKPPIAKITGNVVITLPTSTAELDGSKSSDDKGIVSYLWTRDEGSPAAGEVLNHSDHHPILFLSNLVEGTYTFHLKVTDAKGESDTDRTTVEVKPDPRKNNLVEIILDINVSQLTERLKGMFIRQIGVLLGVLDSDIIVQKIQPYTEQSTKMVFFVQNEPPHQIFKGHEVAAMLKSELRKQKADFLIFRALEVNTVTCQLNCSDHGHCDSFTKRCICDPFWMENFIKVQLRDGDSNCEWSVLYVIIATFVIVVALGILSWTVICCCKRQKGKPKRKSKYKILDATDQESLELKPTSRAGIKQKGLLLSSSLMHSESELDSDDAIFTWPDREKGKLLHGQNGSVPNGQTPLKARSPREEIL</sequence>
<reference key="1">
    <citation type="submission" date="2002-10" db="EMBL/GenBank/DDBJ databases">
        <authorList>
            <person name="Hao D."/>
            <person name="Hooi S."/>
        </authorList>
    </citation>
    <scope>NUCLEOTIDE SEQUENCE [MRNA] (ISOFORM 1)</scope>
</reference>
<reference key="2">
    <citation type="journal article" date="2004" name="Proc. Natl. Acad. Sci. U.S.A.">
        <title>Large-scale cDNA transfection screening for genes related to cancer development and progression.</title>
        <authorList>
            <person name="Wan D."/>
            <person name="Gong Y."/>
            <person name="Qin W."/>
            <person name="Zhang P."/>
            <person name="Li J."/>
            <person name="Wei L."/>
            <person name="Zhou X."/>
            <person name="Li H."/>
            <person name="Qiu X."/>
            <person name="Zhong F."/>
            <person name="He L."/>
            <person name="Yu J."/>
            <person name="Yao G."/>
            <person name="Jiang H."/>
            <person name="Qian L."/>
            <person name="Yu Y."/>
            <person name="Shu H."/>
            <person name="Chen X."/>
            <person name="Xu H."/>
            <person name="Guo M."/>
            <person name="Pan Z."/>
            <person name="Chen Y."/>
            <person name="Ge C."/>
            <person name="Yang S."/>
            <person name="Gu J."/>
        </authorList>
    </citation>
    <scope>NUCLEOTIDE SEQUENCE [LARGE SCALE MRNA] (ISOFORM 1)</scope>
</reference>
<reference key="3">
    <citation type="journal article" date="2006" name="Nature">
        <title>The DNA sequence and biological annotation of human chromosome 1.</title>
        <authorList>
            <person name="Gregory S.G."/>
            <person name="Barlow K.F."/>
            <person name="McLay K.E."/>
            <person name="Kaul R."/>
            <person name="Swarbreck D."/>
            <person name="Dunham A."/>
            <person name="Scott C.E."/>
            <person name="Howe K.L."/>
            <person name="Woodfine K."/>
            <person name="Spencer C.C.A."/>
            <person name="Jones M.C."/>
            <person name="Gillson C."/>
            <person name="Searle S."/>
            <person name="Zhou Y."/>
            <person name="Kokocinski F."/>
            <person name="McDonald L."/>
            <person name="Evans R."/>
            <person name="Phillips K."/>
            <person name="Atkinson A."/>
            <person name="Cooper R."/>
            <person name="Jones C."/>
            <person name="Hall R.E."/>
            <person name="Andrews T.D."/>
            <person name="Lloyd C."/>
            <person name="Ainscough R."/>
            <person name="Almeida J.P."/>
            <person name="Ambrose K.D."/>
            <person name="Anderson F."/>
            <person name="Andrew R.W."/>
            <person name="Ashwell R.I.S."/>
            <person name="Aubin K."/>
            <person name="Babbage A.K."/>
            <person name="Bagguley C.L."/>
            <person name="Bailey J."/>
            <person name="Beasley H."/>
            <person name="Bethel G."/>
            <person name="Bird C.P."/>
            <person name="Bray-Allen S."/>
            <person name="Brown J.Y."/>
            <person name="Brown A.J."/>
            <person name="Buckley D."/>
            <person name="Burton J."/>
            <person name="Bye J."/>
            <person name="Carder C."/>
            <person name="Chapman J.C."/>
            <person name="Clark S.Y."/>
            <person name="Clarke G."/>
            <person name="Clee C."/>
            <person name="Cobley V."/>
            <person name="Collier R.E."/>
            <person name="Corby N."/>
            <person name="Coville G.J."/>
            <person name="Davies J."/>
            <person name="Deadman R."/>
            <person name="Dunn M."/>
            <person name="Earthrowl M."/>
            <person name="Ellington A.G."/>
            <person name="Errington H."/>
            <person name="Frankish A."/>
            <person name="Frankland J."/>
            <person name="French L."/>
            <person name="Garner P."/>
            <person name="Garnett J."/>
            <person name="Gay L."/>
            <person name="Ghori M.R.J."/>
            <person name="Gibson R."/>
            <person name="Gilby L.M."/>
            <person name="Gillett W."/>
            <person name="Glithero R.J."/>
            <person name="Grafham D.V."/>
            <person name="Griffiths C."/>
            <person name="Griffiths-Jones S."/>
            <person name="Grocock R."/>
            <person name="Hammond S."/>
            <person name="Harrison E.S.I."/>
            <person name="Hart E."/>
            <person name="Haugen E."/>
            <person name="Heath P.D."/>
            <person name="Holmes S."/>
            <person name="Holt K."/>
            <person name="Howden P.J."/>
            <person name="Hunt A.R."/>
            <person name="Hunt S.E."/>
            <person name="Hunter G."/>
            <person name="Isherwood J."/>
            <person name="James R."/>
            <person name="Johnson C."/>
            <person name="Johnson D."/>
            <person name="Joy A."/>
            <person name="Kay M."/>
            <person name="Kershaw J.K."/>
            <person name="Kibukawa M."/>
            <person name="Kimberley A.M."/>
            <person name="King A."/>
            <person name="Knights A.J."/>
            <person name="Lad H."/>
            <person name="Laird G."/>
            <person name="Lawlor S."/>
            <person name="Leongamornlert D.A."/>
            <person name="Lloyd D.M."/>
            <person name="Loveland J."/>
            <person name="Lovell J."/>
            <person name="Lush M.J."/>
            <person name="Lyne R."/>
            <person name="Martin S."/>
            <person name="Mashreghi-Mohammadi M."/>
            <person name="Matthews L."/>
            <person name="Matthews N.S.W."/>
            <person name="McLaren S."/>
            <person name="Milne S."/>
            <person name="Mistry S."/>
            <person name="Moore M.J.F."/>
            <person name="Nickerson T."/>
            <person name="O'Dell C.N."/>
            <person name="Oliver K."/>
            <person name="Palmeiri A."/>
            <person name="Palmer S.A."/>
            <person name="Parker A."/>
            <person name="Patel D."/>
            <person name="Pearce A.V."/>
            <person name="Peck A.I."/>
            <person name="Pelan S."/>
            <person name="Phelps K."/>
            <person name="Phillimore B.J."/>
            <person name="Plumb R."/>
            <person name="Rajan J."/>
            <person name="Raymond C."/>
            <person name="Rouse G."/>
            <person name="Saenphimmachak C."/>
            <person name="Sehra H.K."/>
            <person name="Sheridan E."/>
            <person name="Shownkeen R."/>
            <person name="Sims S."/>
            <person name="Skuce C.D."/>
            <person name="Smith M."/>
            <person name="Steward C."/>
            <person name="Subramanian S."/>
            <person name="Sycamore N."/>
            <person name="Tracey A."/>
            <person name="Tromans A."/>
            <person name="Van Helmond Z."/>
            <person name="Wall M."/>
            <person name="Wallis J.M."/>
            <person name="White S."/>
            <person name="Whitehead S.L."/>
            <person name="Wilkinson J.E."/>
            <person name="Willey D.L."/>
            <person name="Williams H."/>
            <person name="Wilming L."/>
            <person name="Wray P.W."/>
            <person name="Wu Z."/>
            <person name="Coulson A."/>
            <person name="Vaudin M."/>
            <person name="Sulston J.E."/>
            <person name="Durbin R.M."/>
            <person name="Hubbard T."/>
            <person name="Wooster R."/>
            <person name="Dunham I."/>
            <person name="Carter N.P."/>
            <person name="McVean G."/>
            <person name="Ross M.T."/>
            <person name="Harrow J."/>
            <person name="Olson M.V."/>
            <person name="Beck S."/>
            <person name="Rogers J."/>
            <person name="Bentley D.R."/>
        </authorList>
    </citation>
    <scope>NUCLEOTIDE SEQUENCE [LARGE SCALE GENOMIC DNA]</scope>
</reference>
<reference key="4">
    <citation type="submission" date="2005-09" db="EMBL/GenBank/DDBJ databases">
        <authorList>
            <person name="Mural R.J."/>
            <person name="Istrail S."/>
            <person name="Sutton G.G."/>
            <person name="Florea L."/>
            <person name="Halpern A.L."/>
            <person name="Mobarry C.M."/>
            <person name="Lippert R."/>
            <person name="Walenz B."/>
            <person name="Shatkay H."/>
            <person name="Dew I."/>
            <person name="Miller J.R."/>
            <person name="Flanigan M.J."/>
            <person name="Edwards N.J."/>
            <person name="Bolanos R."/>
            <person name="Fasulo D."/>
            <person name="Halldorsson B.V."/>
            <person name="Hannenhalli S."/>
            <person name="Turner R."/>
            <person name="Yooseph S."/>
            <person name="Lu F."/>
            <person name="Nusskern D.R."/>
            <person name="Shue B.C."/>
            <person name="Zheng X.H."/>
            <person name="Zhong F."/>
            <person name="Delcher A.L."/>
            <person name="Huson D.H."/>
            <person name="Kravitz S.A."/>
            <person name="Mouchard L."/>
            <person name="Reinert K."/>
            <person name="Remington K.A."/>
            <person name="Clark A.G."/>
            <person name="Waterman M.S."/>
            <person name="Eichler E.E."/>
            <person name="Adams M.D."/>
            <person name="Hunkapiller M.W."/>
            <person name="Myers E.W."/>
            <person name="Venter J.C."/>
        </authorList>
    </citation>
    <scope>NUCLEOTIDE SEQUENCE [LARGE SCALE GENOMIC DNA]</scope>
</reference>
<reference key="5">
    <citation type="journal article" date="2004" name="Genome Res.">
        <title>The status, quality, and expansion of the NIH full-length cDNA project: the Mammalian Gene Collection (MGC).</title>
        <authorList>
            <consortium name="The MGC Project Team"/>
        </authorList>
    </citation>
    <scope>NUCLEOTIDE SEQUENCE [LARGE SCALE MRNA] (ISOFORM 1)</scope>
    <source>
        <tissue>Kidney</tissue>
        <tissue>Lung</tissue>
        <tissue>Muscle</tissue>
        <tissue>Placenta</tissue>
    </source>
</reference>
<reference key="6">
    <citation type="journal article" date="2007" name="BMC Genomics">
        <title>The full-ORF clone resource of the German cDNA consortium.</title>
        <authorList>
            <person name="Bechtel S."/>
            <person name="Rosenfelder H."/>
            <person name="Duda A."/>
            <person name="Schmidt C.P."/>
            <person name="Ernst U."/>
            <person name="Wellenreuther R."/>
            <person name="Mehrle A."/>
            <person name="Schuster C."/>
            <person name="Bahr A."/>
            <person name="Bloecker H."/>
            <person name="Heubner D."/>
            <person name="Hoerlein A."/>
            <person name="Michel G."/>
            <person name="Wedler H."/>
            <person name="Koehrer K."/>
            <person name="Ottenwaelder B."/>
            <person name="Poustka A."/>
            <person name="Wiemann S."/>
            <person name="Schupp I."/>
        </authorList>
    </citation>
    <scope>NUCLEOTIDE SEQUENCE [LARGE SCALE MRNA] OF 304-1049 (ISOFORM 1)</scope>
    <source>
        <tissue>Testis</tissue>
    </source>
</reference>
<reference key="7">
    <citation type="journal article" date="2004" name="Nat. Genet.">
        <title>Complete sequencing and characterization of 21,243 full-length human cDNAs.</title>
        <authorList>
            <person name="Ota T."/>
            <person name="Suzuki Y."/>
            <person name="Nishikawa T."/>
            <person name="Otsuki T."/>
            <person name="Sugiyama T."/>
            <person name="Irie R."/>
            <person name="Wakamatsu A."/>
            <person name="Hayashi K."/>
            <person name="Sato H."/>
            <person name="Nagai K."/>
            <person name="Kimura K."/>
            <person name="Makita H."/>
            <person name="Sekine M."/>
            <person name="Obayashi M."/>
            <person name="Nishi T."/>
            <person name="Shibahara T."/>
            <person name="Tanaka T."/>
            <person name="Ishii S."/>
            <person name="Yamamoto J."/>
            <person name="Saito K."/>
            <person name="Kawai Y."/>
            <person name="Isono Y."/>
            <person name="Nakamura Y."/>
            <person name="Nagahari K."/>
            <person name="Murakami K."/>
            <person name="Yasuda T."/>
            <person name="Iwayanagi T."/>
            <person name="Wagatsuma M."/>
            <person name="Shiratori A."/>
            <person name="Sudo H."/>
            <person name="Hosoiri T."/>
            <person name="Kaku Y."/>
            <person name="Kodaira H."/>
            <person name="Kondo H."/>
            <person name="Sugawara M."/>
            <person name="Takahashi M."/>
            <person name="Kanda K."/>
            <person name="Yokoi T."/>
            <person name="Furuya T."/>
            <person name="Kikkawa E."/>
            <person name="Omura Y."/>
            <person name="Abe K."/>
            <person name="Kamihara K."/>
            <person name="Katsuta N."/>
            <person name="Sato K."/>
            <person name="Tanikawa M."/>
            <person name="Yamazaki M."/>
            <person name="Ninomiya K."/>
            <person name="Ishibashi T."/>
            <person name="Yamashita H."/>
            <person name="Murakawa K."/>
            <person name="Fujimori K."/>
            <person name="Tanai H."/>
            <person name="Kimata M."/>
            <person name="Watanabe M."/>
            <person name="Hiraoka S."/>
            <person name="Chiba Y."/>
            <person name="Ishida S."/>
            <person name="Ono Y."/>
            <person name="Takiguchi S."/>
            <person name="Watanabe S."/>
            <person name="Yosida M."/>
            <person name="Hotuta T."/>
            <person name="Kusano J."/>
            <person name="Kanehori K."/>
            <person name="Takahashi-Fujii A."/>
            <person name="Hara H."/>
            <person name="Tanase T.-O."/>
            <person name="Nomura Y."/>
            <person name="Togiya S."/>
            <person name="Komai F."/>
            <person name="Hara R."/>
            <person name="Takeuchi K."/>
            <person name="Arita M."/>
            <person name="Imose N."/>
            <person name="Musashino K."/>
            <person name="Yuuki H."/>
            <person name="Oshima A."/>
            <person name="Sasaki N."/>
            <person name="Aotsuka S."/>
            <person name="Yoshikawa Y."/>
            <person name="Matsunawa H."/>
            <person name="Ichihara T."/>
            <person name="Shiohata N."/>
            <person name="Sano S."/>
            <person name="Moriya S."/>
            <person name="Momiyama H."/>
            <person name="Satoh N."/>
            <person name="Takami S."/>
            <person name="Terashima Y."/>
            <person name="Suzuki O."/>
            <person name="Nakagawa S."/>
            <person name="Senoh A."/>
            <person name="Mizoguchi H."/>
            <person name="Goto Y."/>
            <person name="Shimizu F."/>
            <person name="Wakebe H."/>
            <person name="Hishigaki H."/>
            <person name="Watanabe T."/>
            <person name="Sugiyama A."/>
            <person name="Takemoto M."/>
            <person name="Kawakami B."/>
            <person name="Yamazaki M."/>
            <person name="Watanabe K."/>
            <person name="Kumagai A."/>
            <person name="Itakura S."/>
            <person name="Fukuzumi Y."/>
            <person name="Fujimori Y."/>
            <person name="Komiyama M."/>
            <person name="Tashiro H."/>
            <person name="Tanigami A."/>
            <person name="Fujiwara T."/>
            <person name="Ono T."/>
            <person name="Yamada K."/>
            <person name="Fujii Y."/>
            <person name="Ozaki K."/>
            <person name="Hirao M."/>
            <person name="Ohmori Y."/>
            <person name="Kawabata A."/>
            <person name="Hikiji T."/>
            <person name="Kobatake N."/>
            <person name="Inagaki H."/>
            <person name="Ikema Y."/>
            <person name="Okamoto S."/>
            <person name="Okitani R."/>
            <person name="Kawakami T."/>
            <person name="Noguchi S."/>
            <person name="Itoh T."/>
            <person name="Shigeta K."/>
            <person name="Senba T."/>
            <person name="Matsumura K."/>
            <person name="Nakajima Y."/>
            <person name="Mizuno T."/>
            <person name="Morinaga M."/>
            <person name="Sasaki M."/>
            <person name="Togashi T."/>
            <person name="Oyama M."/>
            <person name="Hata H."/>
            <person name="Watanabe M."/>
            <person name="Komatsu T."/>
            <person name="Mizushima-Sugano J."/>
            <person name="Satoh T."/>
            <person name="Shirai Y."/>
            <person name="Takahashi Y."/>
            <person name="Nakagawa K."/>
            <person name="Okumura K."/>
            <person name="Nagase T."/>
            <person name="Nomura N."/>
            <person name="Kikuchi H."/>
            <person name="Masuho Y."/>
            <person name="Yamashita R."/>
            <person name="Nakai K."/>
            <person name="Yada T."/>
            <person name="Nakamura Y."/>
            <person name="Ohara O."/>
            <person name="Isogai T."/>
            <person name="Sugano S."/>
        </authorList>
    </citation>
    <scope>NUCLEOTIDE SEQUENCE [LARGE SCALE MRNA] OF 328-1049 (ISOFORM 1)</scope>
    <scope>NUCLEOTIDE SEQUENCE [LARGE SCALE MRNA] (ISOFORM 3)</scope>
    <source>
        <tissue>Amygdala</tissue>
    </source>
</reference>
<reference key="8">
    <citation type="journal article" date="2001" name="DNA Res.">
        <title>Prediction of the coding sequences of unidentified human genes. XX. The complete sequences of 100 new cDNA clones from brain which code for large proteins in vitro.</title>
        <authorList>
            <person name="Nagase T."/>
            <person name="Nakayama M."/>
            <person name="Nakajima D."/>
            <person name="Kikuno R."/>
            <person name="Ohara O."/>
        </authorList>
    </citation>
    <scope>NUCLEOTIDE SEQUENCE [LARGE SCALE MRNA] OF 359-1049 (ISOFORM 2)</scope>
    <source>
        <tissue>Brain</tissue>
    </source>
</reference>
<reference key="9">
    <citation type="journal article" date="2002" name="DNA Res.">
        <title>Construction of expression-ready cDNA clones for KIAA genes: manual curation of 330 KIAA cDNA clones.</title>
        <authorList>
            <person name="Nakajima D."/>
            <person name="Okazaki N."/>
            <person name="Yamakawa H."/>
            <person name="Kikuno R."/>
            <person name="Ohara O."/>
            <person name="Nagase T."/>
        </authorList>
    </citation>
    <scope>SEQUENCE REVISION</scope>
</reference>
<reference key="10">
    <citation type="journal article" date="2009" name="J. Proteome Res.">
        <title>Glycoproteomics analysis of human liver tissue by combination of multiple enzyme digestion and hydrazide chemistry.</title>
        <authorList>
            <person name="Chen R."/>
            <person name="Jiang X."/>
            <person name="Sun D."/>
            <person name="Han G."/>
            <person name="Wang F."/>
            <person name="Ye M."/>
            <person name="Wang L."/>
            <person name="Zou H."/>
        </authorList>
    </citation>
    <scope>GLYCOSYLATION [LARGE SCALE ANALYSIS] AT ASN-472 AND ASN-525</scope>
    <source>
        <tissue>Liver</tissue>
    </source>
</reference>
<reference key="11">
    <citation type="journal article" date="2010" name="Sci. Signal.">
        <title>Quantitative phosphoproteomics reveals widespread full phosphorylation site occupancy during mitosis.</title>
        <authorList>
            <person name="Olsen J.V."/>
            <person name="Vermeulen M."/>
            <person name="Santamaria A."/>
            <person name="Kumar C."/>
            <person name="Miller M.L."/>
            <person name="Jensen L.J."/>
            <person name="Gnad F."/>
            <person name="Cox J."/>
            <person name="Jensen T.S."/>
            <person name="Nigg E.A."/>
            <person name="Brunak S."/>
            <person name="Mann M."/>
        </authorList>
    </citation>
    <scope>PHOSPHORYLATION [LARGE SCALE ANALYSIS] AT THR-1037</scope>
    <scope>IDENTIFICATION BY MASS SPECTROMETRY [LARGE SCALE ANALYSIS]</scope>
    <source>
        <tissue>Cervix carcinoma</tissue>
    </source>
</reference>
<reference key="12">
    <citation type="journal article" date="2011" name="BMC Syst. Biol.">
        <title>Initial characterization of the human central proteome.</title>
        <authorList>
            <person name="Burkard T.R."/>
            <person name="Planyavsky M."/>
            <person name="Kaupe I."/>
            <person name="Breitwieser F.P."/>
            <person name="Buerckstuemmer T."/>
            <person name="Bennett K.L."/>
            <person name="Superti-Furga G."/>
            <person name="Colinge J."/>
        </authorList>
    </citation>
    <scope>IDENTIFICATION BY MASS SPECTROMETRY [LARGE SCALE ANALYSIS]</scope>
</reference>
<reference key="13">
    <citation type="journal article" date="2011" name="Cell. Mol. Neurobiol.">
        <title>Dyslexia-associated kiaa0319-like protein interacts with axon guidance receptor nogo receptor 1.</title>
        <authorList>
            <person name="Poon M.W."/>
            <person name="Tsang W.H."/>
            <person name="Chan S.O."/>
            <person name="Li H.M."/>
            <person name="Ng H.K."/>
            <person name="Waye M.M."/>
        </authorList>
    </citation>
    <scope>FUNCTION</scope>
    <scope>INTERACTION WITH RTN4R</scope>
    <scope>GLYCOSYLATION</scope>
    <scope>SUBCELLULAR LOCATION</scope>
    <scope>TISSUE SPECIFICITY</scope>
</reference>
<reference key="14">
    <citation type="journal article" date="2013" name="J. Proteome Res.">
        <title>Toward a comprehensive characterization of a human cancer cell phosphoproteome.</title>
        <authorList>
            <person name="Zhou H."/>
            <person name="Di Palma S."/>
            <person name="Preisinger C."/>
            <person name="Peng M."/>
            <person name="Polat A.N."/>
            <person name="Heck A.J."/>
            <person name="Mohammed S."/>
        </authorList>
    </citation>
    <scope>PHOSPHORYLATION [LARGE SCALE ANALYSIS] AT THR-974; SER-978 AND SER-1031</scope>
    <scope>IDENTIFICATION BY MASS SPECTROMETRY [LARGE SCALE ANALYSIS]</scope>
    <source>
        <tissue>Cervix carcinoma</tissue>
        <tissue>Erythroleukemia</tissue>
    </source>
</reference>
<reference key="15">
    <citation type="journal article" date="2015" name="Proteomics">
        <title>N-terminome analysis of the human mitochondrial proteome.</title>
        <authorList>
            <person name="Vaca Jacome A.S."/>
            <person name="Rabilloud T."/>
            <person name="Schaeffer-Reiss C."/>
            <person name="Rompais M."/>
            <person name="Ayoub D."/>
            <person name="Lane L."/>
            <person name="Bairoch A."/>
            <person name="Van Dorsselaer A."/>
            <person name="Carapito C."/>
        </authorList>
    </citation>
    <scope>IDENTIFICATION BY MASS SPECTROMETRY [LARGE SCALE ANALYSIS]</scope>
</reference>
<reference key="16">
    <citation type="journal article" date="2016" name="Nature">
        <title>An essential receptor for adeno-associated virus infection.</title>
        <authorList>
            <person name="Pillay S."/>
            <person name="Meyer N.L."/>
            <person name="Puschnik A.S."/>
            <person name="Davulcu O."/>
            <person name="Diep J."/>
            <person name="Ishikawa Y."/>
            <person name="Jae L.T."/>
            <person name="Wosen J.E."/>
            <person name="Nagamine C.M."/>
            <person name="Chapman M.S."/>
            <person name="Carette J.E."/>
        </authorList>
    </citation>
    <scope>INTERACTION WITH AAV-2 VP1</scope>
    <scope>FUNCTION (MICROBIAL INFECTION)</scope>
    <scope>SUBCELLULAR LOCATION</scope>
</reference>
<reference key="17">
    <citation type="submission" date="2007-10" db="PDB data bank">
        <title>Solution structure of the PKD domain from KIAA1837 protein.</title>
        <authorList>
            <consortium name="RIKEN structural genomics initiative (RSGI)"/>
        </authorList>
    </citation>
    <scope>STRUCTURE BY NMR OF 600-688</scope>
</reference>
<gene>
    <name evidence="15" type="primary">KIAA0319L</name>
    <name evidence="12" type="synonym">AAVR</name>
    <name evidence="9" type="synonym">KIAA1837</name>
    <name evidence="11" type="ORF">PP791</name>
</gene>